<comment type="catalytic activity">
    <reaction>
        <text>O-acetyl-L-serine + hydrogen sulfide = L-cysteine + acetate</text>
        <dbReference type="Rhea" id="RHEA:14829"/>
        <dbReference type="ChEBI" id="CHEBI:29919"/>
        <dbReference type="ChEBI" id="CHEBI:30089"/>
        <dbReference type="ChEBI" id="CHEBI:35235"/>
        <dbReference type="ChEBI" id="CHEBI:58340"/>
        <dbReference type="EC" id="2.5.1.47"/>
    </reaction>
</comment>
<comment type="cofactor">
    <cofactor>
        <name>pyridoxal 5'-phosphate</name>
        <dbReference type="ChEBI" id="CHEBI:597326"/>
    </cofactor>
</comment>
<comment type="pathway">
    <text>Amino-acid biosynthesis; L-cysteine biosynthesis; L-cysteine from L-serine: step 2/2.</text>
</comment>
<comment type="similarity">
    <text evidence="2">Belongs to the cysteine synthase/cystathionine beta-synthase family.</text>
</comment>
<comment type="sequence caution" evidence="2">
    <conflict type="erroneous initiation">
        <sequence resource="EMBL-CDS" id="BAA17450"/>
    </conflict>
</comment>
<reference key="1">
    <citation type="journal article" date="1996" name="DNA Res.">
        <title>Sequence analysis of the genome of the unicellular cyanobacterium Synechocystis sp. strain PCC6803. II. Sequence determination of the entire genome and assignment of potential protein-coding regions.</title>
        <authorList>
            <person name="Kaneko T."/>
            <person name="Sato S."/>
            <person name="Kotani H."/>
            <person name="Tanaka A."/>
            <person name="Asamizu E."/>
            <person name="Nakamura Y."/>
            <person name="Miyajima N."/>
            <person name="Hirosawa M."/>
            <person name="Sugiura M."/>
            <person name="Sasamoto S."/>
            <person name="Kimura T."/>
            <person name="Hosouchi T."/>
            <person name="Matsuno A."/>
            <person name="Muraki A."/>
            <person name="Nakazaki N."/>
            <person name="Naruo K."/>
            <person name="Okumura S."/>
            <person name="Shimpo S."/>
            <person name="Takeuchi C."/>
            <person name="Wada T."/>
            <person name="Watanabe A."/>
            <person name="Yamada M."/>
            <person name="Yasuda M."/>
            <person name="Tabata S."/>
        </authorList>
    </citation>
    <scope>NUCLEOTIDE SEQUENCE [LARGE SCALE GENOMIC DNA]</scope>
    <source>
        <strain>ATCC 27184 / PCC 6803 / Kazusa</strain>
    </source>
</reference>
<evidence type="ECO:0000250" key="1"/>
<evidence type="ECO:0000305" key="2"/>
<accession>P73410</accession>
<organism>
    <name type="scientific">Synechocystis sp. (strain ATCC 27184 / PCC 6803 / Kazusa)</name>
    <dbReference type="NCBI Taxonomy" id="1111708"/>
    <lineage>
        <taxon>Bacteria</taxon>
        <taxon>Bacillati</taxon>
        <taxon>Cyanobacteriota</taxon>
        <taxon>Cyanophyceae</taxon>
        <taxon>Synechococcales</taxon>
        <taxon>Merismopediaceae</taxon>
        <taxon>Synechocystis</taxon>
    </lineage>
</organism>
<gene>
    <name type="primary">cysK</name>
    <name type="ordered locus">slr1842</name>
</gene>
<dbReference type="EC" id="2.5.1.47"/>
<dbReference type="EMBL" id="BA000022">
    <property type="protein sequence ID" value="BAA17450.1"/>
    <property type="status" value="ALT_INIT"/>
    <property type="molecule type" value="Genomic_DNA"/>
</dbReference>
<dbReference type="PIR" id="S77347">
    <property type="entry name" value="S77347"/>
</dbReference>
<dbReference type="SMR" id="P73410"/>
<dbReference type="FunCoup" id="P73410">
    <property type="interactions" value="360"/>
</dbReference>
<dbReference type="IntAct" id="P73410">
    <property type="interactions" value="7"/>
</dbReference>
<dbReference type="STRING" id="1148.gene:10498314"/>
<dbReference type="PaxDb" id="1148-1652529"/>
<dbReference type="EnsemblBacteria" id="BAA17450">
    <property type="protein sequence ID" value="BAA17450"/>
    <property type="gene ID" value="BAA17450"/>
</dbReference>
<dbReference type="KEGG" id="syn:slr1842"/>
<dbReference type="eggNOG" id="COG0031">
    <property type="taxonomic scope" value="Bacteria"/>
</dbReference>
<dbReference type="InParanoid" id="P73410"/>
<dbReference type="PhylomeDB" id="P73410"/>
<dbReference type="UniPathway" id="UPA00136">
    <property type="reaction ID" value="UER00200"/>
</dbReference>
<dbReference type="Proteomes" id="UP000001425">
    <property type="component" value="Chromosome"/>
</dbReference>
<dbReference type="GO" id="GO:0005737">
    <property type="term" value="C:cytoplasm"/>
    <property type="evidence" value="ECO:0000318"/>
    <property type="project" value="GO_Central"/>
</dbReference>
<dbReference type="GO" id="GO:0004124">
    <property type="term" value="F:cysteine synthase activity"/>
    <property type="evidence" value="ECO:0000318"/>
    <property type="project" value="GO_Central"/>
</dbReference>
<dbReference type="GO" id="GO:0080146">
    <property type="term" value="F:L-cysteine desulfhydrase activity"/>
    <property type="evidence" value="ECO:0000318"/>
    <property type="project" value="GO_Central"/>
</dbReference>
<dbReference type="GO" id="GO:0006535">
    <property type="term" value="P:cysteine biosynthetic process from serine"/>
    <property type="evidence" value="ECO:0000318"/>
    <property type="project" value="GO_Central"/>
</dbReference>
<dbReference type="CDD" id="cd01561">
    <property type="entry name" value="CBS_like"/>
    <property type="match status" value="1"/>
</dbReference>
<dbReference type="FunFam" id="3.40.50.1100:FF:000067">
    <property type="entry name" value="Cysteine synthase"/>
    <property type="match status" value="1"/>
</dbReference>
<dbReference type="Gene3D" id="3.40.50.1100">
    <property type="match status" value="2"/>
</dbReference>
<dbReference type="InterPro" id="IPR005856">
    <property type="entry name" value="Cys_synth"/>
</dbReference>
<dbReference type="InterPro" id="IPR050214">
    <property type="entry name" value="Cys_Synth/Cystath_Beta-Synth"/>
</dbReference>
<dbReference type="InterPro" id="IPR005859">
    <property type="entry name" value="CysK"/>
</dbReference>
<dbReference type="InterPro" id="IPR001216">
    <property type="entry name" value="P-phosphate_BS"/>
</dbReference>
<dbReference type="InterPro" id="IPR001926">
    <property type="entry name" value="TrpB-like_PALP"/>
</dbReference>
<dbReference type="InterPro" id="IPR036052">
    <property type="entry name" value="TrpB-like_PALP_sf"/>
</dbReference>
<dbReference type="NCBIfam" id="TIGR01139">
    <property type="entry name" value="cysK"/>
    <property type="match status" value="1"/>
</dbReference>
<dbReference type="NCBIfam" id="TIGR01136">
    <property type="entry name" value="cysKM"/>
    <property type="match status" value="1"/>
</dbReference>
<dbReference type="PANTHER" id="PTHR10314">
    <property type="entry name" value="CYSTATHIONINE BETA-SYNTHASE"/>
    <property type="match status" value="1"/>
</dbReference>
<dbReference type="Pfam" id="PF00291">
    <property type="entry name" value="PALP"/>
    <property type="match status" value="1"/>
</dbReference>
<dbReference type="SUPFAM" id="SSF53686">
    <property type="entry name" value="Tryptophan synthase beta subunit-like PLP-dependent enzymes"/>
    <property type="match status" value="1"/>
</dbReference>
<dbReference type="PROSITE" id="PS00901">
    <property type="entry name" value="CYS_SYNTHASE"/>
    <property type="match status" value="1"/>
</dbReference>
<keyword id="KW-0028">Amino-acid biosynthesis</keyword>
<keyword id="KW-0198">Cysteine biosynthesis</keyword>
<keyword id="KW-0663">Pyridoxal phosphate</keyword>
<keyword id="KW-1185">Reference proteome</keyword>
<keyword id="KW-0808">Transferase</keyword>
<protein>
    <recommendedName>
        <fullName>Cysteine synthase</fullName>
        <shortName>CSase</shortName>
        <ecNumber>2.5.1.47</ecNumber>
    </recommendedName>
    <alternativeName>
        <fullName>O-acetylserine (thiol)-lyase</fullName>
        <shortName>OAS-TL</shortName>
    </alternativeName>
    <alternativeName>
        <fullName>O-acetylserine sulfhydrylase</fullName>
    </alternativeName>
</protein>
<sequence>MKIASNITELIGRTPLVRLNRIPLLEGCGAKIVVKLEGMNPAASVKDRIGINMINRAEQEGLIEPGKTLLIEPTSGNTGIALAMVAAAKGYQLILTMPETMSQERRAMLKAYGAKLELTPGSEGMGGCIRRAQELAESLPNAYMLQQFDNPANPQIHQQTTALEIWQDTDGAIDFLVAGVGTGGTITGVASVLKEKKPSFQAIAVEPQNSPVLSGGKPGPHKIQGIGAGFIPEVLDVNLIDEVIAVTDEEAIAYGRRLAREEGILSGISTGAALAAAIKVAKRPANKDKLIVMIQPSFGERYLSTPLFQDLE</sequence>
<name>CYSK_SYNY3</name>
<proteinExistence type="inferred from homology"/>
<feature type="chain" id="PRO_0000167104" description="Cysteine synthase">
    <location>
        <begin position="1"/>
        <end position="312"/>
    </location>
</feature>
<feature type="binding site" evidence="1">
    <location>
        <position position="77"/>
    </location>
    <ligand>
        <name>pyridoxal 5'-phosphate</name>
        <dbReference type="ChEBI" id="CHEBI:597326"/>
    </ligand>
</feature>
<feature type="binding site" evidence="1">
    <location>
        <begin position="181"/>
        <end position="185"/>
    </location>
    <ligand>
        <name>pyridoxal 5'-phosphate</name>
        <dbReference type="ChEBI" id="CHEBI:597326"/>
    </ligand>
</feature>
<feature type="binding site" evidence="1">
    <location>
        <position position="269"/>
    </location>
    <ligand>
        <name>pyridoxal 5'-phosphate</name>
        <dbReference type="ChEBI" id="CHEBI:597326"/>
    </ligand>
</feature>
<feature type="modified residue" description="N6-(pyridoxal phosphate)lysine" evidence="1">
    <location>
        <position position="46"/>
    </location>
</feature>